<keyword id="KW-0229">DNA integration</keyword>
<keyword id="KW-0233">DNA recombination</keyword>
<keyword id="KW-0238">DNA-binding</keyword>
<keyword id="KW-0378">Hydrolase</keyword>
<keyword id="KW-0808">Transferase</keyword>
<keyword id="KW-1179">Viral genome integration</keyword>
<keyword id="KW-1160">Virus entry into host cell</keyword>
<organismHost>
    <name type="scientific">Escherichia coli</name>
    <dbReference type="NCBI Taxonomy" id="562"/>
</organismHost>
<reference key="1">
    <citation type="journal article" date="1989" name="J. Mol. Biol.">
        <title>Determinants of site-specific recombination in the lambdoid coliphage HK022. An evolutionary change in specificity.</title>
        <authorList>
            <person name="Yagil E."/>
            <person name="Dolev S."/>
            <person name="Oberto J."/>
            <person name="Kislev N."/>
            <person name="Ramaiah N."/>
            <person name="Weisberg R.A."/>
        </authorList>
    </citation>
    <scope>NUCLEOTIDE SEQUENCE [GENOMIC DNA]</scope>
</reference>
<proteinExistence type="inferred from homology"/>
<gene>
    <name type="primary">int</name>
</gene>
<feature type="chain" id="PRO_0000197523" description="Integrase">
    <location>
        <begin position="1"/>
        <end position="357"/>
    </location>
</feature>
<feature type="domain" description="Core-binding (CB)" evidence="3">
    <location>
        <begin position="74"/>
        <end position="155"/>
    </location>
</feature>
<feature type="domain" description="Tyr recombinase" evidence="2">
    <location>
        <begin position="175"/>
        <end position="355"/>
    </location>
</feature>
<feature type="active site" evidence="2">
    <location>
        <position position="212"/>
    </location>
</feature>
<feature type="active site" evidence="2">
    <location>
        <position position="235"/>
    </location>
</feature>
<feature type="active site" evidence="2">
    <location>
        <position position="308"/>
    </location>
</feature>
<feature type="active site" evidence="2">
    <location>
        <position position="311"/>
    </location>
</feature>
<feature type="active site" evidence="2">
    <location>
        <position position="333"/>
    </location>
</feature>
<feature type="active site" description="O-(3'-phospho-DNA)-tyrosine intermediate" evidence="2">
    <location>
        <position position="342"/>
    </location>
</feature>
<accession>P16407</accession>
<name>VINT_BPHK0</name>
<evidence type="ECO:0000250" key="1">
    <source>
        <dbReference type="UniProtKB" id="P03700"/>
    </source>
</evidence>
<evidence type="ECO:0000255" key="2">
    <source>
        <dbReference type="PROSITE-ProRule" id="PRU01246"/>
    </source>
</evidence>
<evidence type="ECO:0000255" key="3">
    <source>
        <dbReference type="PROSITE-ProRule" id="PRU01248"/>
    </source>
</evidence>
<evidence type="ECO:0000305" key="4"/>
<organism>
    <name type="scientific">Escherichia phage HK022</name>
    <name type="common">Bacteriophage HK022</name>
    <dbReference type="NCBI Taxonomy" id="10742"/>
    <lineage>
        <taxon>Viruses</taxon>
        <taxon>Duplodnaviria</taxon>
        <taxon>Heunggongvirae</taxon>
        <taxon>Uroviricota</taxon>
        <taxon>Caudoviricetes</taxon>
        <taxon>Hendrixvirinae</taxon>
        <taxon>Shamshuipovirus</taxon>
    </lineage>
</organism>
<protein>
    <recommendedName>
        <fullName>Integrase</fullName>
        <ecNumber evidence="1">2.7.7.-</ecNumber>
        <ecNumber evidence="1">3.1.-.-</ecNumber>
    </recommendedName>
</protein>
<comment type="function">
    <text>Integrase is necessary for integration of the phage into the host genome by site-specific recombination. In conjunction with excisionase, integrase is also necessary for excision of the prophage from the host genome.</text>
</comment>
<comment type="similarity">
    <text evidence="4">Belongs to the 'phage' integrase family.</text>
</comment>
<sequence>MGRRRSHERRDLPPNLYIRNNGYYCYRDPRTGKEFGLGRDRRIAITEAIQANIELLSGNRRESLIDRIKGADAITLHAWLDRYETILSERGIRPKTLLDYASKIRAIRRKLPDKPLADISTKEVAAMLNTYVAEGKSASAKLIRSTLVDVFREAIAEGHVATNPVTATRTAKSEVRRSRLTANEYVAIYHAAEPLPIWLRLAMDLAVVTGQRVGDLCRMKWSDINDNHLHIEQSKTGAKLAIPLTLTIDALNISLADTLQQCREASSSETIIASKHHDPLSPKTVSKYFTKARNASGLSFDGNPPTFHELRSLSARLYRNQIGDKFAQRLLGHKSDSMAARYRDSRGREWDKIEIDK</sequence>
<dbReference type="EC" id="2.7.7.-" evidence="1"/>
<dbReference type="EC" id="3.1.-.-" evidence="1"/>
<dbReference type="EMBL" id="X51962">
    <property type="protein sequence ID" value="CAA36221.1"/>
    <property type="molecule type" value="Genomic_DNA"/>
</dbReference>
<dbReference type="PIR" id="S04990">
    <property type="entry name" value="S04990"/>
</dbReference>
<dbReference type="RefSeq" id="NP_037686.1">
    <property type="nucleotide sequence ID" value="NC_002166.1"/>
</dbReference>
<dbReference type="SMR" id="P16407"/>
<dbReference type="iPTMnet" id="P16407"/>
<dbReference type="KEGG" id="vg:1262484"/>
<dbReference type="OrthoDB" id="3373at10239"/>
<dbReference type="GO" id="GO:0003677">
    <property type="term" value="F:DNA binding"/>
    <property type="evidence" value="ECO:0007669"/>
    <property type="project" value="UniProtKB-KW"/>
</dbReference>
<dbReference type="GO" id="GO:0016787">
    <property type="term" value="F:hydrolase activity"/>
    <property type="evidence" value="ECO:0007669"/>
    <property type="project" value="UniProtKB-KW"/>
</dbReference>
<dbReference type="GO" id="GO:0008907">
    <property type="term" value="F:integrase activity"/>
    <property type="evidence" value="ECO:0007669"/>
    <property type="project" value="InterPro"/>
</dbReference>
<dbReference type="GO" id="GO:0016740">
    <property type="term" value="F:transferase activity"/>
    <property type="evidence" value="ECO:0007669"/>
    <property type="project" value="UniProtKB-KW"/>
</dbReference>
<dbReference type="GO" id="GO:0006310">
    <property type="term" value="P:DNA recombination"/>
    <property type="evidence" value="ECO:0007669"/>
    <property type="project" value="UniProtKB-KW"/>
</dbReference>
<dbReference type="GO" id="GO:0075713">
    <property type="term" value="P:establishment of integrated proviral latency"/>
    <property type="evidence" value="ECO:0007669"/>
    <property type="project" value="UniProtKB-KW"/>
</dbReference>
<dbReference type="GO" id="GO:0046718">
    <property type="term" value="P:symbiont entry into host cell"/>
    <property type="evidence" value="ECO:0007669"/>
    <property type="project" value="UniProtKB-KW"/>
</dbReference>
<dbReference type="GO" id="GO:0044826">
    <property type="term" value="P:viral genome integration into host DNA"/>
    <property type="evidence" value="ECO:0007669"/>
    <property type="project" value="UniProtKB-KW"/>
</dbReference>
<dbReference type="CDD" id="cd00800">
    <property type="entry name" value="INT_Lambda_C"/>
    <property type="match status" value="1"/>
</dbReference>
<dbReference type="Gene3D" id="1.10.150.130">
    <property type="match status" value="1"/>
</dbReference>
<dbReference type="Gene3D" id="3.30.160.60">
    <property type="entry name" value="Classic Zinc Finger"/>
    <property type="match status" value="1"/>
</dbReference>
<dbReference type="Gene3D" id="1.10.443.10">
    <property type="entry name" value="Intergrase catalytic core"/>
    <property type="match status" value="1"/>
</dbReference>
<dbReference type="InterPro" id="IPR044068">
    <property type="entry name" value="CB"/>
</dbReference>
<dbReference type="InterPro" id="IPR016177">
    <property type="entry name" value="DNA-bd_dom_sf"/>
</dbReference>
<dbReference type="InterPro" id="IPR011010">
    <property type="entry name" value="DNA_brk_join_enz"/>
</dbReference>
<dbReference type="InterPro" id="IPR013762">
    <property type="entry name" value="Integrase-like_cat_sf"/>
</dbReference>
<dbReference type="InterPro" id="IPR002104">
    <property type="entry name" value="Integrase_catalytic"/>
</dbReference>
<dbReference type="InterPro" id="IPR015094">
    <property type="entry name" value="Integrase_lambda-typ_DNA-bd_N"/>
</dbReference>
<dbReference type="InterPro" id="IPR010998">
    <property type="entry name" value="Integrase_recombinase_N"/>
</dbReference>
<dbReference type="InterPro" id="IPR004107">
    <property type="entry name" value="Integrase_SAM-like_N"/>
</dbReference>
<dbReference type="InterPro" id="IPR050808">
    <property type="entry name" value="Phage_Integrase"/>
</dbReference>
<dbReference type="PANTHER" id="PTHR30629">
    <property type="entry name" value="PROPHAGE INTEGRASE"/>
    <property type="match status" value="1"/>
</dbReference>
<dbReference type="PANTHER" id="PTHR30629:SF2">
    <property type="entry name" value="PROPHAGE INTEGRASE INTS-RELATED"/>
    <property type="match status" value="1"/>
</dbReference>
<dbReference type="Pfam" id="PF09003">
    <property type="entry name" value="Arm-DNA-bind_1"/>
    <property type="match status" value="1"/>
</dbReference>
<dbReference type="Pfam" id="PF02899">
    <property type="entry name" value="Phage_int_SAM_1"/>
    <property type="match status" value="1"/>
</dbReference>
<dbReference type="Pfam" id="PF00589">
    <property type="entry name" value="Phage_integrase"/>
    <property type="match status" value="1"/>
</dbReference>
<dbReference type="SUPFAM" id="SSF56349">
    <property type="entry name" value="DNA breaking-rejoining enzymes"/>
    <property type="match status" value="1"/>
</dbReference>
<dbReference type="SUPFAM" id="SSF54171">
    <property type="entry name" value="DNA-binding domain"/>
    <property type="match status" value="1"/>
</dbReference>
<dbReference type="PROSITE" id="PS51900">
    <property type="entry name" value="CB"/>
    <property type="match status" value="1"/>
</dbReference>
<dbReference type="PROSITE" id="PS51898">
    <property type="entry name" value="TYR_RECOMBINASE"/>
    <property type="match status" value="1"/>
</dbReference>